<protein>
    <recommendedName>
        <fullName evidence="1">Holliday junction branch migration complex subunit RuvB</fullName>
        <ecNumber evidence="1">3.6.4.-</ecNumber>
    </recommendedName>
</protein>
<sequence>MTNRILDMEQMQDEEYVERTLRPQKLNEYIGQDKVKDQLKIFIEAAKLRDEALDHTLLFGPPGLGKTTMAFVIANELGVNIKQTSGPVIEKAGDLVALLNDLEPGDVLFIDEIHRMPMAVEEILYSAMEDFYIDIMIGAGEASRSVHLELPPFTLIGATTRAGMLSNPLRARFGITGHMEYYELADLTEIVERTADIFDMEITHEAAIELARRSRGTPRIANRLLKRVRDFAQIMGDGLIDDSITDKALTMLDVDREGLDYVDQKILRTMIEMYGGGPVGLNTLSVNIAEERETVEDMYEPYLIQQGFLMRTRTGRVATAKAYEHLGYPYTEK</sequence>
<accession>A4VSD3</accession>
<evidence type="ECO:0000255" key="1">
    <source>
        <dbReference type="HAMAP-Rule" id="MF_00016"/>
    </source>
</evidence>
<proteinExistence type="inferred from homology"/>
<organism>
    <name type="scientific">Streptococcus suis (strain 05ZYH33)</name>
    <dbReference type="NCBI Taxonomy" id="391295"/>
    <lineage>
        <taxon>Bacteria</taxon>
        <taxon>Bacillati</taxon>
        <taxon>Bacillota</taxon>
        <taxon>Bacilli</taxon>
        <taxon>Lactobacillales</taxon>
        <taxon>Streptococcaceae</taxon>
        <taxon>Streptococcus</taxon>
    </lineage>
</organism>
<feature type="chain" id="PRO_0000322845" description="Holliday junction branch migration complex subunit RuvB">
    <location>
        <begin position="1"/>
        <end position="333"/>
    </location>
</feature>
<feature type="region of interest" description="Large ATPase domain (RuvB-L)" evidence="1">
    <location>
        <begin position="1"/>
        <end position="182"/>
    </location>
</feature>
<feature type="region of interest" description="Small ATPAse domain (RuvB-S)" evidence="1">
    <location>
        <begin position="183"/>
        <end position="253"/>
    </location>
</feature>
<feature type="region of interest" description="Head domain (RuvB-H)" evidence="1">
    <location>
        <begin position="256"/>
        <end position="333"/>
    </location>
</feature>
<feature type="binding site" evidence="1">
    <location>
        <position position="21"/>
    </location>
    <ligand>
        <name>ATP</name>
        <dbReference type="ChEBI" id="CHEBI:30616"/>
    </ligand>
</feature>
<feature type="binding site" evidence="1">
    <location>
        <position position="22"/>
    </location>
    <ligand>
        <name>ATP</name>
        <dbReference type="ChEBI" id="CHEBI:30616"/>
    </ligand>
</feature>
<feature type="binding site" evidence="1">
    <location>
        <position position="63"/>
    </location>
    <ligand>
        <name>ATP</name>
        <dbReference type="ChEBI" id="CHEBI:30616"/>
    </ligand>
</feature>
<feature type="binding site" evidence="1">
    <location>
        <position position="66"/>
    </location>
    <ligand>
        <name>ATP</name>
        <dbReference type="ChEBI" id="CHEBI:30616"/>
    </ligand>
</feature>
<feature type="binding site" evidence="1">
    <location>
        <position position="67"/>
    </location>
    <ligand>
        <name>ATP</name>
        <dbReference type="ChEBI" id="CHEBI:30616"/>
    </ligand>
</feature>
<feature type="binding site" evidence="1">
    <location>
        <position position="67"/>
    </location>
    <ligand>
        <name>Mg(2+)</name>
        <dbReference type="ChEBI" id="CHEBI:18420"/>
    </ligand>
</feature>
<feature type="binding site" evidence="1">
    <location>
        <position position="68"/>
    </location>
    <ligand>
        <name>ATP</name>
        <dbReference type="ChEBI" id="CHEBI:30616"/>
    </ligand>
</feature>
<feature type="binding site" evidence="1">
    <location>
        <begin position="129"/>
        <end position="131"/>
    </location>
    <ligand>
        <name>ATP</name>
        <dbReference type="ChEBI" id="CHEBI:30616"/>
    </ligand>
</feature>
<feature type="binding site" evidence="1">
    <location>
        <position position="172"/>
    </location>
    <ligand>
        <name>ATP</name>
        <dbReference type="ChEBI" id="CHEBI:30616"/>
    </ligand>
</feature>
<feature type="binding site" evidence="1">
    <location>
        <position position="182"/>
    </location>
    <ligand>
        <name>ATP</name>
        <dbReference type="ChEBI" id="CHEBI:30616"/>
    </ligand>
</feature>
<feature type="binding site" evidence="1">
    <location>
        <position position="219"/>
    </location>
    <ligand>
        <name>ATP</name>
        <dbReference type="ChEBI" id="CHEBI:30616"/>
    </ligand>
</feature>
<feature type="binding site" evidence="1">
    <location>
        <position position="292"/>
    </location>
    <ligand>
        <name>DNA</name>
        <dbReference type="ChEBI" id="CHEBI:16991"/>
    </ligand>
</feature>
<feature type="binding site" evidence="1">
    <location>
        <position position="311"/>
    </location>
    <ligand>
        <name>DNA</name>
        <dbReference type="ChEBI" id="CHEBI:16991"/>
    </ligand>
</feature>
<feature type="binding site" evidence="1">
    <location>
        <position position="313"/>
    </location>
    <ligand>
        <name>DNA</name>
        <dbReference type="ChEBI" id="CHEBI:16991"/>
    </ligand>
</feature>
<feature type="binding site" evidence="1">
    <location>
        <position position="316"/>
    </location>
    <ligand>
        <name>DNA</name>
        <dbReference type="ChEBI" id="CHEBI:16991"/>
    </ligand>
</feature>
<name>RUVB_STRSY</name>
<comment type="function">
    <text evidence="1">The RuvA-RuvB-RuvC complex processes Holliday junction (HJ) DNA during genetic recombination and DNA repair, while the RuvA-RuvB complex plays an important role in the rescue of blocked DNA replication forks via replication fork reversal (RFR). RuvA specifically binds to HJ cruciform DNA, conferring on it an open structure. The RuvB hexamer acts as an ATP-dependent pump, pulling dsDNA into and through the RuvAB complex. RuvB forms 2 homohexamers on either side of HJ DNA bound by 1 or 2 RuvA tetramers; 4 subunits per hexamer contact DNA at a time. Coordinated motions by a converter formed by DNA-disengaged RuvB subunits stimulates ATP hydrolysis and nucleotide exchange. Immobilization of the converter enables RuvB to convert the ATP-contained energy into a lever motion, pulling 2 nucleotides of DNA out of the RuvA tetramer per ATP hydrolyzed, thus driving DNA branch migration. The RuvB motors rotate together with the DNA substrate, which together with the progressing nucleotide cycle form the mechanistic basis for DNA recombination by continuous HJ branch migration. Branch migration allows RuvC to scan DNA until it finds its consensus sequence, where it cleaves and resolves cruciform DNA.</text>
</comment>
<comment type="catalytic activity">
    <reaction evidence="1">
        <text>ATP + H2O = ADP + phosphate + H(+)</text>
        <dbReference type="Rhea" id="RHEA:13065"/>
        <dbReference type="ChEBI" id="CHEBI:15377"/>
        <dbReference type="ChEBI" id="CHEBI:15378"/>
        <dbReference type="ChEBI" id="CHEBI:30616"/>
        <dbReference type="ChEBI" id="CHEBI:43474"/>
        <dbReference type="ChEBI" id="CHEBI:456216"/>
    </reaction>
</comment>
<comment type="subunit">
    <text evidence="1">Homohexamer. Forms an RuvA(8)-RuvB(12)-Holliday junction (HJ) complex. HJ DNA is sandwiched between 2 RuvA tetramers; dsDNA enters through RuvA and exits via RuvB. An RuvB hexamer assembles on each DNA strand where it exits the tetramer. Each RuvB hexamer is contacted by two RuvA subunits (via domain III) on 2 adjacent RuvB subunits; this complex drives branch migration. In the full resolvosome a probable DNA-RuvA(4)-RuvB(12)-RuvC(2) complex forms which resolves the HJ.</text>
</comment>
<comment type="subcellular location">
    <subcellularLocation>
        <location evidence="1">Cytoplasm</location>
    </subcellularLocation>
</comment>
<comment type="domain">
    <text evidence="1">Has 3 domains, the large (RuvB-L) and small ATPase (RuvB-S) domains and the C-terminal head (RuvB-H) domain. The head domain binds DNA, while the ATPase domains jointly bind ATP, ADP or are empty depending on the state of the subunit in the translocation cycle. During a single DNA translocation step the structure of each domain remains the same, but their relative positions change.</text>
</comment>
<comment type="similarity">
    <text evidence="1">Belongs to the RuvB family.</text>
</comment>
<reference key="1">
    <citation type="journal article" date="2007" name="PLoS ONE">
        <title>A glimpse of streptococcal toxic shock syndrome from comparative genomics of S. suis 2 Chinese isolates.</title>
        <authorList>
            <person name="Chen C."/>
            <person name="Tang J."/>
            <person name="Dong W."/>
            <person name="Wang C."/>
            <person name="Feng Y."/>
            <person name="Wang J."/>
            <person name="Zheng F."/>
            <person name="Pan X."/>
            <person name="Liu D."/>
            <person name="Li M."/>
            <person name="Song Y."/>
            <person name="Zhu X."/>
            <person name="Sun H."/>
            <person name="Feng T."/>
            <person name="Guo Z."/>
            <person name="Ju A."/>
            <person name="Ge J."/>
            <person name="Dong Y."/>
            <person name="Sun W."/>
            <person name="Jiang Y."/>
            <person name="Wang J."/>
            <person name="Yan J."/>
            <person name="Yang H."/>
            <person name="Wang X."/>
            <person name="Gao G.F."/>
            <person name="Yang R."/>
            <person name="Wang J."/>
            <person name="Yu J."/>
        </authorList>
    </citation>
    <scope>NUCLEOTIDE SEQUENCE [LARGE SCALE GENOMIC DNA]</scope>
    <source>
        <strain>05ZYH33</strain>
    </source>
</reference>
<gene>
    <name evidence="1" type="primary">ruvB</name>
    <name type="ordered locus">SSU05_0050</name>
</gene>
<dbReference type="EC" id="3.6.4.-" evidence="1"/>
<dbReference type="EMBL" id="CP000407">
    <property type="protein sequence ID" value="ABP89022.1"/>
    <property type="molecule type" value="Genomic_DNA"/>
</dbReference>
<dbReference type="SMR" id="A4VSD3"/>
<dbReference type="STRING" id="391295.SSU05_0050"/>
<dbReference type="KEGG" id="ssu:SSU05_0050"/>
<dbReference type="eggNOG" id="COG2255">
    <property type="taxonomic scope" value="Bacteria"/>
</dbReference>
<dbReference type="HOGENOM" id="CLU_055599_1_0_9"/>
<dbReference type="GO" id="GO:0005737">
    <property type="term" value="C:cytoplasm"/>
    <property type="evidence" value="ECO:0007669"/>
    <property type="project" value="UniProtKB-SubCell"/>
</dbReference>
<dbReference type="GO" id="GO:0048476">
    <property type="term" value="C:Holliday junction resolvase complex"/>
    <property type="evidence" value="ECO:0007669"/>
    <property type="project" value="UniProtKB-UniRule"/>
</dbReference>
<dbReference type="GO" id="GO:0005524">
    <property type="term" value="F:ATP binding"/>
    <property type="evidence" value="ECO:0007669"/>
    <property type="project" value="UniProtKB-UniRule"/>
</dbReference>
<dbReference type="GO" id="GO:0016887">
    <property type="term" value="F:ATP hydrolysis activity"/>
    <property type="evidence" value="ECO:0007669"/>
    <property type="project" value="InterPro"/>
</dbReference>
<dbReference type="GO" id="GO:0000400">
    <property type="term" value="F:four-way junction DNA binding"/>
    <property type="evidence" value="ECO:0007669"/>
    <property type="project" value="UniProtKB-UniRule"/>
</dbReference>
<dbReference type="GO" id="GO:0009378">
    <property type="term" value="F:four-way junction helicase activity"/>
    <property type="evidence" value="ECO:0007669"/>
    <property type="project" value="InterPro"/>
</dbReference>
<dbReference type="GO" id="GO:0006310">
    <property type="term" value="P:DNA recombination"/>
    <property type="evidence" value="ECO:0007669"/>
    <property type="project" value="UniProtKB-UniRule"/>
</dbReference>
<dbReference type="GO" id="GO:0006281">
    <property type="term" value="P:DNA repair"/>
    <property type="evidence" value="ECO:0007669"/>
    <property type="project" value="UniProtKB-UniRule"/>
</dbReference>
<dbReference type="CDD" id="cd00009">
    <property type="entry name" value="AAA"/>
    <property type="match status" value="1"/>
</dbReference>
<dbReference type="Gene3D" id="1.10.8.60">
    <property type="match status" value="1"/>
</dbReference>
<dbReference type="Gene3D" id="3.40.50.300">
    <property type="entry name" value="P-loop containing nucleotide triphosphate hydrolases"/>
    <property type="match status" value="1"/>
</dbReference>
<dbReference type="Gene3D" id="1.10.10.10">
    <property type="entry name" value="Winged helix-like DNA-binding domain superfamily/Winged helix DNA-binding domain"/>
    <property type="match status" value="1"/>
</dbReference>
<dbReference type="HAMAP" id="MF_00016">
    <property type="entry name" value="DNA_HJ_migration_RuvB"/>
    <property type="match status" value="1"/>
</dbReference>
<dbReference type="InterPro" id="IPR003593">
    <property type="entry name" value="AAA+_ATPase"/>
</dbReference>
<dbReference type="InterPro" id="IPR041445">
    <property type="entry name" value="AAA_lid_4"/>
</dbReference>
<dbReference type="InterPro" id="IPR004605">
    <property type="entry name" value="DNA_helicase_Holl-junc_RuvB"/>
</dbReference>
<dbReference type="InterPro" id="IPR027417">
    <property type="entry name" value="P-loop_NTPase"/>
</dbReference>
<dbReference type="InterPro" id="IPR008824">
    <property type="entry name" value="RuvB-like_N"/>
</dbReference>
<dbReference type="InterPro" id="IPR008823">
    <property type="entry name" value="RuvB_C"/>
</dbReference>
<dbReference type="InterPro" id="IPR036388">
    <property type="entry name" value="WH-like_DNA-bd_sf"/>
</dbReference>
<dbReference type="InterPro" id="IPR036390">
    <property type="entry name" value="WH_DNA-bd_sf"/>
</dbReference>
<dbReference type="NCBIfam" id="NF000868">
    <property type="entry name" value="PRK00080.1"/>
    <property type="match status" value="1"/>
</dbReference>
<dbReference type="NCBIfam" id="TIGR00635">
    <property type="entry name" value="ruvB"/>
    <property type="match status" value="1"/>
</dbReference>
<dbReference type="PANTHER" id="PTHR42848">
    <property type="match status" value="1"/>
</dbReference>
<dbReference type="PANTHER" id="PTHR42848:SF1">
    <property type="entry name" value="HOLLIDAY JUNCTION BRANCH MIGRATION COMPLEX SUBUNIT RUVB"/>
    <property type="match status" value="1"/>
</dbReference>
<dbReference type="Pfam" id="PF17864">
    <property type="entry name" value="AAA_lid_4"/>
    <property type="match status" value="1"/>
</dbReference>
<dbReference type="Pfam" id="PF05491">
    <property type="entry name" value="RuvB_C"/>
    <property type="match status" value="1"/>
</dbReference>
<dbReference type="Pfam" id="PF05496">
    <property type="entry name" value="RuvB_N"/>
    <property type="match status" value="1"/>
</dbReference>
<dbReference type="SMART" id="SM00382">
    <property type="entry name" value="AAA"/>
    <property type="match status" value="1"/>
</dbReference>
<dbReference type="SUPFAM" id="SSF52540">
    <property type="entry name" value="P-loop containing nucleoside triphosphate hydrolases"/>
    <property type="match status" value="1"/>
</dbReference>
<dbReference type="SUPFAM" id="SSF46785">
    <property type="entry name" value="Winged helix' DNA-binding domain"/>
    <property type="match status" value="1"/>
</dbReference>
<keyword id="KW-0067">ATP-binding</keyword>
<keyword id="KW-0963">Cytoplasm</keyword>
<keyword id="KW-0227">DNA damage</keyword>
<keyword id="KW-0233">DNA recombination</keyword>
<keyword id="KW-0234">DNA repair</keyword>
<keyword id="KW-0238">DNA-binding</keyword>
<keyword id="KW-0378">Hydrolase</keyword>
<keyword id="KW-0547">Nucleotide-binding</keyword>